<proteinExistence type="inferred from homology"/>
<feature type="chain" id="PRO_0000171940" description="UPF0316 protein YebE">
    <location>
        <begin position="1"/>
        <end position="184"/>
    </location>
</feature>
<feature type="transmembrane region" description="Helical" evidence="1">
    <location>
        <begin position="9"/>
        <end position="29"/>
    </location>
</feature>
<feature type="transmembrane region" description="Helical" evidence="1">
    <location>
        <begin position="41"/>
        <end position="61"/>
    </location>
</feature>
<feature type="transmembrane region" description="Helical" evidence="1">
    <location>
        <begin position="67"/>
        <end position="87"/>
    </location>
</feature>
<comment type="subcellular location">
    <subcellularLocation>
        <location evidence="2">Cell membrane</location>
        <topology evidence="2">Multi-pass membrane protein</topology>
    </subcellularLocation>
</comment>
<comment type="similarity">
    <text evidence="2">Belongs to the UPF0316 family.</text>
</comment>
<comment type="sequence caution" evidence="2">
    <conflict type="frameshift">
        <sequence resource="EMBL-CDS" id="AAB62316"/>
    </conflict>
</comment>
<sequence>MMQTILSNGIAMVLIILIINIVYVSFFTIRMILTLKGQRYLAAGISTIEILVYVTGLSLVLDNLDQIQNVIAYALGYGLGVIVGMKIEEKLALGYIMVNVITKELDLDLPKQLREKGYGVTNWVAGGLEGDRTALQILTPRRYELQLYDTIKTLDSKAFIIAYEPKTIHGGFWVKAVKKRRIKE</sequence>
<reference key="1">
    <citation type="journal article" date="1996" name="Microbiology">
        <title>The 52 degrees-55 degrees segment of the Bacillus subtilis chromosome: a region devoted to purine uptake and metabolism, and containing the genes cotA, gabP and guaA and the pur gene cluster within a 34960 bp nucleotide sequence.</title>
        <authorList>
            <person name="Borriss R."/>
            <person name="Porwollik S."/>
            <person name="Schroeter R."/>
        </authorList>
    </citation>
    <scope>NUCLEOTIDE SEQUENCE [GENOMIC DNA]</scope>
    <source>
        <strain>168</strain>
    </source>
</reference>
<reference key="2">
    <citation type="journal article" date="1997" name="Nature">
        <title>The complete genome sequence of the Gram-positive bacterium Bacillus subtilis.</title>
        <authorList>
            <person name="Kunst F."/>
            <person name="Ogasawara N."/>
            <person name="Moszer I."/>
            <person name="Albertini A.M."/>
            <person name="Alloni G."/>
            <person name="Azevedo V."/>
            <person name="Bertero M.G."/>
            <person name="Bessieres P."/>
            <person name="Bolotin A."/>
            <person name="Borchert S."/>
            <person name="Borriss R."/>
            <person name="Boursier L."/>
            <person name="Brans A."/>
            <person name="Braun M."/>
            <person name="Brignell S.C."/>
            <person name="Bron S."/>
            <person name="Brouillet S."/>
            <person name="Bruschi C.V."/>
            <person name="Caldwell B."/>
            <person name="Capuano V."/>
            <person name="Carter N.M."/>
            <person name="Choi S.-K."/>
            <person name="Codani J.-J."/>
            <person name="Connerton I.F."/>
            <person name="Cummings N.J."/>
            <person name="Daniel R.A."/>
            <person name="Denizot F."/>
            <person name="Devine K.M."/>
            <person name="Duesterhoeft A."/>
            <person name="Ehrlich S.D."/>
            <person name="Emmerson P.T."/>
            <person name="Entian K.-D."/>
            <person name="Errington J."/>
            <person name="Fabret C."/>
            <person name="Ferrari E."/>
            <person name="Foulger D."/>
            <person name="Fritz C."/>
            <person name="Fujita M."/>
            <person name="Fujita Y."/>
            <person name="Fuma S."/>
            <person name="Galizzi A."/>
            <person name="Galleron N."/>
            <person name="Ghim S.-Y."/>
            <person name="Glaser P."/>
            <person name="Goffeau A."/>
            <person name="Golightly E.J."/>
            <person name="Grandi G."/>
            <person name="Guiseppi G."/>
            <person name="Guy B.J."/>
            <person name="Haga K."/>
            <person name="Haiech J."/>
            <person name="Harwood C.R."/>
            <person name="Henaut A."/>
            <person name="Hilbert H."/>
            <person name="Holsappel S."/>
            <person name="Hosono S."/>
            <person name="Hullo M.-F."/>
            <person name="Itaya M."/>
            <person name="Jones L.-M."/>
            <person name="Joris B."/>
            <person name="Karamata D."/>
            <person name="Kasahara Y."/>
            <person name="Klaerr-Blanchard M."/>
            <person name="Klein C."/>
            <person name="Kobayashi Y."/>
            <person name="Koetter P."/>
            <person name="Koningstein G."/>
            <person name="Krogh S."/>
            <person name="Kumano M."/>
            <person name="Kurita K."/>
            <person name="Lapidus A."/>
            <person name="Lardinois S."/>
            <person name="Lauber J."/>
            <person name="Lazarevic V."/>
            <person name="Lee S.-M."/>
            <person name="Levine A."/>
            <person name="Liu H."/>
            <person name="Masuda S."/>
            <person name="Mauel C."/>
            <person name="Medigue C."/>
            <person name="Medina N."/>
            <person name="Mellado R.P."/>
            <person name="Mizuno M."/>
            <person name="Moestl D."/>
            <person name="Nakai S."/>
            <person name="Noback M."/>
            <person name="Noone D."/>
            <person name="O'Reilly M."/>
            <person name="Ogawa K."/>
            <person name="Ogiwara A."/>
            <person name="Oudega B."/>
            <person name="Park S.-H."/>
            <person name="Parro V."/>
            <person name="Pohl T.M."/>
            <person name="Portetelle D."/>
            <person name="Porwollik S."/>
            <person name="Prescott A.M."/>
            <person name="Presecan E."/>
            <person name="Pujic P."/>
            <person name="Purnelle B."/>
            <person name="Rapoport G."/>
            <person name="Rey M."/>
            <person name="Reynolds S."/>
            <person name="Rieger M."/>
            <person name="Rivolta C."/>
            <person name="Rocha E."/>
            <person name="Roche B."/>
            <person name="Rose M."/>
            <person name="Sadaie Y."/>
            <person name="Sato T."/>
            <person name="Scanlan E."/>
            <person name="Schleich S."/>
            <person name="Schroeter R."/>
            <person name="Scoffone F."/>
            <person name="Sekiguchi J."/>
            <person name="Sekowska A."/>
            <person name="Seror S.J."/>
            <person name="Serror P."/>
            <person name="Shin B.-S."/>
            <person name="Soldo B."/>
            <person name="Sorokin A."/>
            <person name="Tacconi E."/>
            <person name="Takagi T."/>
            <person name="Takahashi H."/>
            <person name="Takemaru K."/>
            <person name="Takeuchi M."/>
            <person name="Tamakoshi A."/>
            <person name="Tanaka T."/>
            <person name="Terpstra P."/>
            <person name="Tognoni A."/>
            <person name="Tosato V."/>
            <person name="Uchiyama S."/>
            <person name="Vandenbol M."/>
            <person name="Vannier F."/>
            <person name="Vassarotti A."/>
            <person name="Viari A."/>
            <person name="Wambutt R."/>
            <person name="Wedler E."/>
            <person name="Wedler H."/>
            <person name="Weitzenegger T."/>
            <person name="Winters P."/>
            <person name="Wipat A."/>
            <person name="Yamamoto H."/>
            <person name="Yamane K."/>
            <person name="Yasumoto K."/>
            <person name="Yata K."/>
            <person name="Yoshida K."/>
            <person name="Yoshikawa H.-F."/>
            <person name="Zumstein E."/>
            <person name="Yoshikawa H."/>
            <person name="Danchin A."/>
        </authorList>
    </citation>
    <scope>NUCLEOTIDE SEQUENCE [LARGE SCALE GENOMIC DNA]</scope>
    <source>
        <strain>168</strain>
    </source>
</reference>
<reference key="3">
    <citation type="journal article" date="1999" name="Genome Res.">
        <title>Detecting and analyzing DNA sequencing errors: toward a higher quality of the Bacillus subtilis genome sequence.</title>
        <authorList>
            <person name="Medigue C."/>
            <person name="Rose M."/>
            <person name="Viari A."/>
            <person name="Danchin A."/>
        </authorList>
    </citation>
    <scope>SEQUENCE REVISION</scope>
</reference>
<evidence type="ECO:0000255" key="1"/>
<evidence type="ECO:0000305" key="2"/>
<dbReference type="EMBL" id="U51115">
    <property type="protein sequence ID" value="AAB62315.1"/>
    <property type="status" value="ALT_FRAME"/>
    <property type="molecule type" value="Genomic_DNA"/>
</dbReference>
<dbReference type="EMBL" id="U51115">
    <property type="protein sequence ID" value="AAB62316.1"/>
    <property type="status" value="ALT_FRAME"/>
    <property type="molecule type" value="Genomic_DNA"/>
</dbReference>
<dbReference type="EMBL" id="AL009126">
    <property type="protein sequence ID" value="CAB12459.2"/>
    <property type="molecule type" value="Genomic_DNA"/>
</dbReference>
<dbReference type="PIR" id="A69792">
    <property type="entry name" value="A69792"/>
</dbReference>
<dbReference type="PIR" id="B69792">
    <property type="entry name" value="B69792"/>
</dbReference>
<dbReference type="RefSeq" id="NP_388521.2">
    <property type="nucleotide sequence ID" value="NC_000964.3"/>
</dbReference>
<dbReference type="RefSeq" id="WP_009966729.1">
    <property type="nucleotide sequence ID" value="NZ_OZ025638.1"/>
</dbReference>
<dbReference type="SMR" id="O34624"/>
<dbReference type="FunCoup" id="O34624">
    <property type="interactions" value="6"/>
</dbReference>
<dbReference type="STRING" id="224308.BSU06400"/>
<dbReference type="PaxDb" id="224308-BSU06400"/>
<dbReference type="EnsemblBacteria" id="CAB12459">
    <property type="protein sequence ID" value="CAB12459"/>
    <property type="gene ID" value="BSU_06400"/>
</dbReference>
<dbReference type="GeneID" id="939480"/>
<dbReference type="KEGG" id="bsu:BSU06400"/>
<dbReference type="PATRIC" id="fig|224308.179.peg.696"/>
<dbReference type="eggNOG" id="COG4843">
    <property type="taxonomic scope" value="Bacteria"/>
</dbReference>
<dbReference type="InParanoid" id="O34624"/>
<dbReference type="OrthoDB" id="48231at2"/>
<dbReference type="PhylomeDB" id="O34624"/>
<dbReference type="BioCyc" id="BSUB:BSU06400-MONOMER"/>
<dbReference type="Proteomes" id="UP000001570">
    <property type="component" value="Chromosome"/>
</dbReference>
<dbReference type="GO" id="GO:0005886">
    <property type="term" value="C:plasma membrane"/>
    <property type="evidence" value="ECO:0007669"/>
    <property type="project" value="UniProtKB-SubCell"/>
</dbReference>
<dbReference type="CDD" id="cd16381">
    <property type="entry name" value="YitT_C_like_1"/>
    <property type="match status" value="1"/>
</dbReference>
<dbReference type="HAMAP" id="MF_01515">
    <property type="entry name" value="UPF0316"/>
    <property type="match status" value="1"/>
</dbReference>
<dbReference type="InterPro" id="IPR019264">
    <property type="entry name" value="DUF2179"/>
</dbReference>
<dbReference type="InterPro" id="IPR044035">
    <property type="entry name" value="DUF5698"/>
</dbReference>
<dbReference type="InterPro" id="IPR022930">
    <property type="entry name" value="UPF0316"/>
</dbReference>
<dbReference type="NCBIfam" id="NF003194">
    <property type="entry name" value="PRK04164.1-5"/>
    <property type="match status" value="1"/>
</dbReference>
<dbReference type="PANTHER" id="PTHR40060">
    <property type="entry name" value="UPF0316 PROTEIN YEBE"/>
    <property type="match status" value="1"/>
</dbReference>
<dbReference type="PANTHER" id="PTHR40060:SF1">
    <property type="entry name" value="UPF0316 PROTEIN YEBE"/>
    <property type="match status" value="1"/>
</dbReference>
<dbReference type="Pfam" id="PF10035">
    <property type="entry name" value="DUF2179"/>
    <property type="match status" value="1"/>
</dbReference>
<dbReference type="Pfam" id="PF18955">
    <property type="entry name" value="DUF5698"/>
    <property type="match status" value="1"/>
</dbReference>
<name>YEBE_BACSU</name>
<keyword id="KW-1003">Cell membrane</keyword>
<keyword id="KW-0472">Membrane</keyword>
<keyword id="KW-1185">Reference proteome</keyword>
<keyword id="KW-0812">Transmembrane</keyword>
<keyword id="KW-1133">Transmembrane helix</keyword>
<protein>
    <recommendedName>
        <fullName>UPF0316 protein YebE</fullName>
    </recommendedName>
</protein>
<accession>O34624</accession>
<accession>O34695</accession>
<organism>
    <name type="scientific">Bacillus subtilis (strain 168)</name>
    <dbReference type="NCBI Taxonomy" id="224308"/>
    <lineage>
        <taxon>Bacteria</taxon>
        <taxon>Bacillati</taxon>
        <taxon>Bacillota</taxon>
        <taxon>Bacilli</taxon>
        <taxon>Bacillales</taxon>
        <taxon>Bacillaceae</taxon>
        <taxon>Bacillus</taxon>
    </lineage>
</organism>
<gene>
    <name type="primary">yebE</name>
    <name type="synonym">yebF</name>
    <name type="ordered locus">BSU06400</name>
</gene>